<name>ZNT8_HUMAN</name>
<gene>
    <name evidence="19" type="primary">SLC30A8</name>
    <name evidence="14" type="synonym">ZNT8</name>
</gene>
<accession>Q8IWU4</accession>
<accession>A0AVP9</accession>
<accession>A5YM39</accession>
<accession>B4DPE0</accession>
<accession>Q8TCL3</accession>
<organism>
    <name type="scientific">Homo sapiens</name>
    <name type="common">Human</name>
    <dbReference type="NCBI Taxonomy" id="9606"/>
    <lineage>
        <taxon>Eukaryota</taxon>
        <taxon>Metazoa</taxon>
        <taxon>Chordata</taxon>
        <taxon>Craniata</taxon>
        <taxon>Vertebrata</taxon>
        <taxon>Euteleostomi</taxon>
        <taxon>Mammalia</taxon>
        <taxon>Eutheria</taxon>
        <taxon>Euarchontoglires</taxon>
        <taxon>Primates</taxon>
        <taxon>Haplorrhini</taxon>
        <taxon>Catarrhini</taxon>
        <taxon>Hominidae</taxon>
        <taxon>Homo</taxon>
    </lineage>
</organism>
<dbReference type="EMBL" id="AY117411">
    <property type="protein sequence ID" value="AAM80562.1"/>
    <property type="molecule type" value="mRNA"/>
</dbReference>
<dbReference type="EMBL" id="AK298294">
    <property type="protein sequence ID" value="BAG60552.1"/>
    <property type="molecule type" value="mRNA"/>
</dbReference>
<dbReference type="EMBL" id="AL713790">
    <property type="protein sequence ID" value="CAD28545.1"/>
    <property type="molecule type" value="mRNA"/>
</dbReference>
<dbReference type="EMBL" id="EF560713">
    <property type="protein sequence ID" value="ABQ59023.1"/>
    <property type="molecule type" value="mRNA"/>
</dbReference>
<dbReference type="EMBL" id="AC027419">
    <property type="status" value="NOT_ANNOTATED_CDS"/>
    <property type="molecule type" value="Genomic_DNA"/>
</dbReference>
<dbReference type="EMBL" id="AC084114">
    <property type="status" value="NOT_ANNOTATED_CDS"/>
    <property type="molecule type" value="Genomic_DNA"/>
</dbReference>
<dbReference type="EMBL" id="CH471060">
    <property type="protein sequence ID" value="EAW91968.1"/>
    <property type="molecule type" value="Genomic_DNA"/>
</dbReference>
<dbReference type="EMBL" id="BC126446">
    <property type="status" value="NOT_ANNOTATED_CDS"/>
    <property type="molecule type" value="mRNA"/>
</dbReference>
<dbReference type="CCDS" id="CCDS55272.1">
    <molecule id="Q8IWU4-2"/>
</dbReference>
<dbReference type="CCDS" id="CCDS6322.1">
    <molecule id="Q8IWU4-1"/>
</dbReference>
<dbReference type="RefSeq" id="NP_001166282.1">
    <molecule id="Q8IWU4-2"/>
    <property type="nucleotide sequence ID" value="NM_001172811.2"/>
</dbReference>
<dbReference type="RefSeq" id="NP_001166284.1">
    <molecule id="Q8IWU4-2"/>
    <property type="nucleotide sequence ID" value="NM_001172813.2"/>
</dbReference>
<dbReference type="RefSeq" id="NP_001166285.1">
    <molecule id="Q8IWU4-2"/>
    <property type="nucleotide sequence ID" value="NM_001172814.2"/>
</dbReference>
<dbReference type="RefSeq" id="NP_001166286.1">
    <molecule id="Q8IWU4-2"/>
    <property type="nucleotide sequence ID" value="NM_001172815.3"/>
</dbReference>
<dbReference type="RefSeq" id="NP_776250.2">
    <molecule id="Q8IWU4-1"/>
    <property type="nucleotide sequence ID" value="NM_173851.3"/>
</dbReference>
<dbReference type="RefSeq" id="XP_024302851.1">
    <molecule id="Q8IWU4-2"/>
    <property type="nucleotide sequence ID" value="XM_024447083.2"/>
</dbReference>
<dbReference type="PDB" id="6XPD">
    <property type="method" value="EM"/>
    <property type="resolution" value="3.80 A"/>
    <property type="chains" value="A/B=50-369"/>
</dbReference>
<dbReference type="PDB" id="6XPE">
    <property type="method" value="EM"/>
    <property type="resolution" value="4.10 A"/>
    <property type="chains" value="A/B=50-369"/>
</dbReference>
<dbReference type="PDB" id="6XPF">
    <property type="method" value="EM"/>
    <property type="resolution" value="5.90 A"/>
    <property type="chains" value="A/B=50-369"/>
</dbReference>
<dbReference type="PDBsum" id="6XPD"/>
<dbReference type="PDBsum" id="6XPE"/>
<dbReference type="PDBsum" id="6XPF"/>
<dbReference type="EMDB" id="EMD-22285"/>
<dbReference type="EMDB" id="EMD-22286"/>
<dbReference type="EMDB" id="EMD-22287"/>
<dbReference type="SMR" id="Q8IWU4"/>
<dbReference type="BioGRID" id="127975">
    <property type="interactions" value="70"/>
</dbReference>
<dbReference type="ComplexPortal" id="CPX-8382">
    <property type="entry name" value="ZNT8 proton-coupled zinc antiporter homodimer"/>
</dbReference>
<dbReference type="FunCoup" id="Q8IWU4">
    <property type="interactions" value="46"/>
</dbReference>
<dbReference type="IntAct" id="Q8IWU4">
    <property type="interactions" value="76"/>
</dbReference>
<dbReference type="MINT" id="Q8IWU4"/>
<dbReference type="STRING" id="9606.ENSP00000415011"/>
<dbReference type="DrugBank" id="DB14533">
    <property type="generic name" value="Zinc chloride"/>
</dbReference>
<dbReference type="DrugBank" id="DB14548">
    <property type="generic name" value="Zinc sulfate, unspecified form"/>
</dbReference>
<dbReference type="TCDB" id="2.A.4.3.5">
    <property type="family name" value="the cation diffusion facilitator (cdf) family"/>
</dbReference>
<dbReference type="iPTMnet" id="Q8IWU4"/>
<dbReference type="PhosphoSitePlus" id="Q8IWU4"/>
<dbReference type="BioMuta" id="SLC30A8"/>
<dbReference type="DMDM" id="190358866"/>
<dbReference type="MassIVE" id="Q8IWU4"/>
<dbReference type="PaxDb" id="9606-ENSP00000415011"/>
<dbReference type="PeptideAtlas" id="Q8IWU4"/>
<dbReference type="ProteomicsDB" id="70895">
    <molecule id="Q8IWU4-1"/>
</dbReference>
<dbReference type="ProteomicsDB" id="70896">
    <molecule id="Q8IWU4-2"/>
</dbReference>
<dbReference type="Antibodypedia" id="42965">
    <property type="antibodies" value="212 antibodies from 33 providers"/>
</dbReference>
<dbReference type="DNASU" id="169026"/>
<dbReference type="Ensembl" id="ENST00000427715.2">
    <molecule id="Q8IWU4-2"/>
    <property type="protein sequence ID" value="ENSP00000407505.2"/>
    <property type="gene ID" value="ENSG00000164756.13"/>
</dbReference>
<dbReference type="Ensembl" id="ENST00000456015.7">
    <molecule id="Q8IWU4-1"/>
    <property type="protein sequence ID" value="ENSP00000415011.2"/>
    <property type="gene ID" value="ENSG00000164756.13"/>
</dbReference>
<dbReference type="Ensembl" id="ENST00000519688.5">
    <molecule id="Q8IWU4-2"/>
    <property type="protein sequence ID" value="ENSP00000431069.1"/>
    <property type="gene ID" value="ENSG00000164756.13"/>
</dbReference>
<dbReference type="Ensembl" id="ENST00000521243.5">
    <molecule id="Q8IWU4-2"/>
    <property type="protein sequence ID" value="ENSP00000428545.1"/>
    <property type="gene ID" value="ENSG00000164756.13"/>
</dbReference>
<dbReference type="GeneID" id="169026"/>
<dbReference type="KEGG" id="hsa:169026"/>
<dbReference type="MANE-Select" id="ENST00000456015.7">
    <property type="protein sequence ID" value="ENSP00000415011.2"/>
    <property type="RefSeq nucleotide sequence ID" value="NM_173851.3"/>
    <property type="RefSeq protein sequence ID" value="NP_776250.2"/>
</dbReference>
<dbReference type="UCSC" id="uc003yog.3">
    <molecule id="Q8IWU4-1"/>
    <property type="organism name" value="human"/>
</dbReference>
<dbReference type="AGR" id="HGNC:20303"/>
<dbReference type="CTD" id="169026"/>
<dbReference type="DisGeNET" id="169026"/>
<dbReference type="GeneCards" id="SLC30A8"/>
<dbReference type="HGNC" id="HGNC:20303">
    <property type="gene designation" value="SLC30A8"/>
</dbReference>
<dbReference type="HPA" id="ENSG00000164756">
    <property type="expression patterns" value="Tissue enriched (pancreas)"/>
</dbReference>
<dbReference type="MalaCards" id="SLC30A8"/>
<dbReference type="MIM" id="125853">
    <property type="type" value="phenotype"/>
</dbReference>
<dbReference type="MIM" id="611145">
    <property type="type" value="gene"/>
</dbReference>
<dbReference type="neXtProt" id="NX_Q8IWU4"/>
<dbReference type="OpenTargets" id="ENSG00000164756"/>
<dbReference type="PharmGKB" id="PA134915546"/>
<dbReference type="VEuPathDB" id="HostDB:ENSG00000164756"/>
<dbReference type="eggNOG" id="KOG1482">
    <property type="taxonomic scope" value="Eukaryota"/>
</dbReference>
<dbReference type="GeneTree" id="ENSGT00940000160706"/>
<dbReference type="HOGENOM" id="CLU_013430_0_1_1"/>
<dbReference type="InParanoid" id="Q8IWU4"/>
<dbReference type="OMA" id="RATKMYA"/>
<dbReference type="OrthoDB" id="9944568at2759"/>
<dbReference type="PAN-GO" id="Q8IWU4">
    <property type="GO annotations" value="7 GO annotations based on evolutionary models"/>
</dbReference>
<dbReference type="PhylomeDB" id="Q8IWU4"/>
<dbReference type="TreeFam" id="TF313382"/>
<dbReference type="PathwayCommons" id="Q8IWU4"/>
<dbReference type="Reactome" id="R-HSA-264876">
    <property type="pathway name" value="Insulin processing"/>
</dbReference>
<dbReference type="Reactome" id="R-HSA-435368">
    <property type="pathway name" value="Zinc efflux and compartmentalization by the SLC30 family"/>
</dbReference>
<dbReference type="SignaLink" id="Q8IWU4"/>
<dbReference type="BioGRID-ORCS" id="169026">
    <property type="hits" value="12 hits in 1148 CRISPR screens"/>
</dbReference>
<dbReference type="ChiTaRS" id="SLC30A8">
    <property type="organism name" value="human"/>
</dbReference>
<dbReference type="GeneWiki" id="SLC30A8"/>
<dbReference type="GenomeRNAi" id="169026"/>
<dbReference type="Pharos" id="Q8IWU4">
    <property type="development level" value="Tbio"/>
</dbReference>
<dbReference type="PRO" id="PR:Q8IWU4"/>
<dbReference type="Proteomes" id="UP000005640">
    <property type="component" value="Chromosome 8"/>
</dbReference>
<dbReference type="RNAct" id="Q8IWU4">
    <property type="molecule type" value="protein"/>
</dbReference>
<dbReference type="Bgee" id="ENSG00000164756">
    <property type="expression patterns" value="Expressed in islet of Langerhans and 93 other cell types or tissues"/>
</dbReference>
<dbReference type="ExpressionAtlas" id="Q8IWU4">
    <property type="expression patterns" value="baseline and differential"/>
</dbReference>
<dbReference type="GO" id="GO:0031410">
    <property type="term" value="C:cytoplasmic vesicle"/>
    <property type="evidence" value="ECO:0000250"/>
    <property type="project" value="BHF-UCL"/>
</dbReference>
<dbReference type="GO" id="GO:0000139">
    <property type="term" value="C:Golgi membrane"/>
    <property type="evidence" value="ECO:0000304"/>
    <property type="project" value="Reactome"/>
</dbReference>
<dbReference type="GO" id="GO:0043231">
    <property type="term" value="C:intracellular membrane-bounded organelle"/>
    <property type="evidence" value="ECO:0000314"/>
    <property type="project" value="HPA"/>
</dbReference>
<dbReference type="GO" id="GO:0005886">
    <property type="term" value="C:plasma membrane"/>
    <property type="evidence" value="ECO:0000314"/>
    <property type="project" value="BHF-UCL"/>
</dbReference>
<dbReference type="GO" id="GO:0030141">
    <property type="term" value="C:secretory granule"/>
    <property type="evidence" value="ECO:0000314"/>
    <property type="project" value="BHF-UCL"/>
</dbReference>
<dbReference type="GO" id="GO:0030667">
    <property type="term" value="C:secretory granule membrane"/>
    <property type="evidence" value="ECO:0000314"/>
    <property type="project" value="UniProtKB"/>
</dbReference>
<dbReference type="GO" id="GO:0030658">
    <property type="term" value="C:transport vesicle membrane"/>
    <property type="evidence" value="ECO:0007669"/>
    <property type="project" value="UniProtKB-SubCell"/>
</dbReference>
<dbReference type="GO" id="GO:0042803">
    <property type="term" value="F:protein homodimerization activity"/>
    <property type="evidence" value="ECO:0000250"/>
    <property type="project" value="BHF-UCL"/>
</dbReference>
<dbReference type="GO" id="GO:0008270">
    <property type="term" value="F:zinc ion binding"/>
    <property type="evidence" value="ECO:0000305"/>
    <property type="project" value="BHF-UCL"/>
</dbReference>
<dbReference type="GO" id="GO:0005385">
    <property type="term" value="F:zinc ion transmembrane transporter activity"/>
    <property type="evidence" value="ECO:0000314"/>
    <property type="project" value="BHF-UCL"/>
</dbReference>
<dbReference type="GO" id="GO:0140826">
    <property type="term" value="F:zinc:proton antiporter activity"/>
    <property type="evidence" value="ECO:0000314"/>
    <property type="project" value="UniProtKB"/>
</dbReference>
<dbReference type="GO" id="GO:0030070">
    <property type="term" value="P:insulin processing"/>
    <property type="evidence" value="ECO:0000304"/>
    <property type="project" value="Reactome"/>
</dbReference>
<dbReference type="GO" id="GO:0030073">
    <property type="term" value="P:insulin secretion"/>
    <property type="evidence" value="ECO:0000315"/>
    <property type="project" value="BHF-UCL"/>
</dbReference>
<dbReference type="GO" id="GO:0006882">
    <property type="term" value="P:intracellular zinc ion homeostasis"/>
    <property type="evidence" value="ECO:0000250"/>
    <property type="project" value="BHF-UCL"/>
</dbReference>
<dbReference type="GO" id="GO:0032024">
    <property type="term" value="P:positive regulation of insulin secretion"/>
    <property type="evidence" value="ECO:0000250"/>
    <property type="project" value="BHF-UCL"/>
</dbReference>
<dbReference type="GO" id="GO:0060627">
    <property type="term" value="P:regulation of vesicle-mediated transport"/>
    <property type="evidence" value="ECO:0000250"/>
    <property type="project" value="BHF-UCL"/>
</dbReference>
<dbReference type="GO" id="GO:0009749">
    <property type="term" value="P:response to glucose"/>
    <property type="evidence" value="ECO:0000315"/>
    <property type="project" value="BHF-UCL"/>
</dbReference>
<dbReference type="GO" id="GO:0070555">
    <property type="term" value="P:response to interleukin-1"/>
    <property type="evidence" value="ECO:0007669"/>
    <property type="project" value="Ensembl"/>
</dbReference>
<dbReference type="GO" id="GO:0034341">
    <property type="term" value="P:response to type II interferon"/>
    <property type="evidence" value="ECO:0007669"/>
    <property type="project" value="Ensembl"/>
</dbReference>
<dbReference type="GO" id="GO:0010043">
    <property type="term" value="P:response to zinc ion"/>
    <property type="evidence" value="ECO:0000318"/>
    <property type="project" value="GO_Central"/>
</dbReference>
<dbReference type="GO" id="GO:0071578">
    <property type="term" value="P:zinc ion import across plasma membrane"/>
    <property type="evidence" value="ECO:0000250"/>
    <property type="project" value="BHF-UCL"/>
</dbReference>
<dbReference type="GO" id="GO:0062111">
    <property type="term" value="P:zinc ion import into organelle"/>
    <property type="evidence" value="ECO:0000315"/>
    <property type="project" value="UniProtKB"/>
</dbReference>
<dbReference type="GO" id="GO:0071577">
    <property type="term" value="P:zinc ion transmembrane transport"/>
    <property type="evidence" value="ECO:0000318"/>
    <property type="project" value="GO_Central"/>
</dbReference>
<dbReference type="GO" id="GO:0006829">
    <property type="term" value="P:zinc ion transport"/>
    <property type="evidence" value="ECO:0000314"/>
    <property type="project" value="BHF-UCL"/>
</dbReference>
<dbReference type="FunFam" id="1.20.1510.10:FF:000002">
    <property type="entry name" value="zinc transporter 3 isoform X1"/>
    <property type="match status" value="1"/>
</dbReference>
<dbReference type="Gene3D" id="1.20.1510.10">
    <property type="entry name" value="Cation efflux protein transmembrane domain"/>
    <property type="match status" value="1"/>
</dbReference>
<dbReference type="InterPro" id="IPR002524">
    <property type="entry name" value="Cation_efflux"/>
</dbReference>
<dbReference type="InterPro" id="IPR036837">
    <property type="entry name" value="Cation_efflux_CTD_sf"/>
</dbReference>
<dbReference type="InterPro" id="IPR027469">
    <property type="entry name" value="Cation_efflux_TMD_sf"/>
</dbReference>
<dbReference type="InterPro" id="IPR050681">
    <property type="entry name" value="CDF/SLC30A"/>
</dbReference>
<dbReference type="NCBIfam" id="TIGR01297">
    <property type="entry name" value="CDF"/>
    <property type="match status" value="1"/>
</dbReference>
<dbReference type="PANTHER" id="PTHR11562">
    <property type="entry name" value="CATION EFFLUX PROTEIN/ ZINC TRANSPORTER"/>
    <property type="match status" value="1"/>
</dbReference>
<dbReference type="PANTHER" id="PTHR11562:SF37">
    <property type="entry name" value="PROTON-COUPLED ZINC ANTIPORTER SLC30A8"/>
    <property type="match status" value="1"/>
</dbReference>
<dbReference type="Pfam" id="PF01545">
    <property type="entry name" value="Cation_efflux"/>
    <property type="match status" value="1"/>
</dbReference>
<dbReference type="SUPFAM" id="SSF160240">
    <property type="entry name" value="Cation efflux protein cytoplasmic domain-like"/>
    <property type="match status" value="1"/>
</dbReference>
<dbReference type="SUPFAM" id="SSF161111">
    <property type="entry name" value="Cation efflux protein transmembrane domain-like"/>
    <property type="match status" value="1"/>
</dbReference>
<feature type="chain" id="PRO_0000281740" description="Proton-coupled zinc antiporter SLC30A8">
    <location>
        <begin position="1"/>
        <end position="369"/>
    </location>
</feature>
<feature type="topological domain" description="Cytoplasmic" evidence="5">
    <location>
        <begin position="1"/>
        <end position="79"/>
    </location>
</feature>
<feature type="transmembrane region" description="Helical" evidence="1">
    <location>
        <begin position="80"/>
        <end position="100"/>
    </location>
</feature>
<feature type="topological domain" description="Lumenal, vesicle" evidence="5">
    <location>
        <begin position="101"/>
        <end position="103"/>
    </location>
</feature>
<feature type="transmembrane region" description="Helical" evidence="1">
    <location>
        <begin position="104"/>
        <end position="124"/>
    </location>
</feature>
<feature type="topological domain" description="Cytoplasmic" evidence="5">
    <location>
        <begin position="125"/>
        <end position="140"/>
    </location>
</feature>
<feature type="transmembrane region" description="Helical" evidence="1">
    <location>
        <begin position="141"/>
        <end position="161"/>
    </location>
</feature>
<feature type="topological domain" description="Lumenal, vesicle" evidence="5">
    <location>
        <begin position="162"/>
        <end position="175"/>
    </location>
</feature>
<feature type="transmembrane region" description="Helical" evidence="1">
    <location>
        <begin position="176"/>
        <end position="196"/>
    </location>
</feature>
<feature type="topological domain" description="Cytoplasmic" evidence="5">
    <location>
        <begin position="197"/>
        <end position="217"/>
    </location>
</feature>
<feature type="transmembrane region" description="Helical" evidence="1">
    <location>
        <begin position="218"/>
        <end position="238"/>
    </location>
</feature>
<feature type="topological domain" description="Lumenal, vesicle" evidence="5">
    <location>
        <begin position="239"/>
        <end position="245"/>
    </location>
</feature>
<feature type="transmembrane region" description="Helical" evidence="1">
    <location>
        <begin position="246"/>
        <end position="266"/>
    </location>
</feature>
<feature type="topological domain" description="Cytoplasmic" evidence="5">
    <location>
        <begin position="267"/>
        <end position="369"/>
    </location>
</feature>
<feature type="region of interest" description="Disordered" evidence="2">
    <location>
        <begin position="31"/>
        <end position="52"/>
    </location>
</feature>
<feature type="short sequence motif" description="HCH Motif; seals regulatory zinc-binding pocket" evidence="10">
    <location>
        <begin position="52"/>
        <end position="54"/>
    </location>
</feature>
<feature type="compositionally biased region" description="Basic and acidic residues" evidence="2">
    <location>
        <begin position="32"/>
        <end position="44"/>
    </location>
</feature>
<feature type="binding site" description="in chain A" evidence="10 20">
    <location>
        <position position="52"/>
    </location>
    <ligand>
        <name>Zn(2+)</name>
        <dbReference type="ChEBI" id="CHEBI:29105"/>
        <label>3</label>
        <note>regulatory; ligand shared between homodimeric partners</note>
    </ligand>
</feature>
<feature type="binding site" description="in chain A" evidence="10 20">
    <location>
        <position position="53"/>
    </location>
    <ligand>
        <name>Zn(2+)</name>
        <dbReference type="ChEBI" id="CHEBI:29105"/>
        <label>2</label>
        <note>regulatory; ligand shared between homodimeric partners</note>
    </ligand>
</feature>
<feature type="binding site" description="in chain A" evidence="10 20">
    <location>
        <position position="54"/>
    </location>
    <ligand>
        <name>Zn(2+)</name>
        <dbReference type="ChEBI" id="CHEBI:29105"/>
        <label>3</label>
        <note>regulatory; ligand shared between homodimeric partners</note>
    </ligand>
</feature>
<feature type="binding site" evidence="10 20">
    <location>
        <position position="106"/>
    </location>
    <ligand>
        <name>Zn(2+)</name>
        <dbReference type="ChEBI" id="CHEBI:29105"/>
        <label>1</label>
        <note>transported zinc</note>
    </ligand>
</feature>
<feature type="binding site" evidence="10 20">
    <location>
        <position position="110"/>
    </location>
    <ligand>
        <name>Zn(2+)</name>
        <dbReference type="ChEBI" id="CHEBI:29105"/>
        <label>1</label>
        <note>transported zinc</note>
    </ligand>
</feature>
<feature type="binding site" evidence="10 20">
    <location>
        <position position="137"/>
    </location>
    <ligand>
        <name>Zn(2+)</name>
        <dbReference type="ChEBI" id="CHEBI:29105"/>
        <label>4</label>
        <note>low affinity</note>
    </ligand>
</feature>
<feature type="binding site" evidence="10 20">
    <location>
        <position position="220"/>
    </location>
    <ligand>
        <name>Zn(2+)</name>
        <dbReference type="ChEBI" id="CHEBI:29105"/>
        <label>1</label>
        <note>transported zinc</note>
    </ligand>
</feature>
<feature type="binding site" evidence="10 20">
    <location>
        <position position="224"/>
    </location>
    <ligand>
        <name>Zn(2+)</name>
        <dbReference type="ChEBI" id="CHEBI:29105"/>
        <label>1</label>
        <note>transported zinc</note>
    </ligand>
</feature>
<feature type="binding site" description="in chain B" evidence="10 20">
    <location>
        <position position="301"/>
    </location>
    <ligand>
        <name>Zn(2+)</name>
        <dbReference type="ChEBI" id="CHEBI:29105"/>
        <label>2</label>
        <note>regulatory; ligand shared between homodimeric partners</note>
    </ligand>
</feature>
<feature type="binding site" description="in chain B" evidence="10 20">
    <location>
        <position position="318"/>
    </location>
    <ligand>
        <name>Zn(2+)</name>
        <dbReference type="ChEBI" id="CHEBI:29105"/>
        <label>2</label>
        <note>regulatory; ligand shared between homodimeric partners</note>
    </ligand>
</feature>
<feature type="binding site" evidence="10 20">
    <location>
        <position position="345"/>
    </location>
    <ligand>
        <name>Zn(2+)</name>
        <dbReference type="ChEBI" id="CHEBI:29105"/>
        <label>4</label>
        <note>low affinity</note>
    </ligand>
</feature>
<feature type="binding site" description="in chain B" evidence="10 20">
    <location>
        <position position="352"/>
    </location>
    <ligand>
        <name>Zn(2+)</name>
        <dbReference type="ChEBI" id="CHEBI:29105"/>
        <label>2</label>
        <note>regulatory; ligand shared between homodimeric partners</note>
    </ligand>
</feature>
<feature type="binding site" description="in chain B" evidence="10 20">
    <location>
        <position position="361"/>
    </location>
    <ligand>
        <name>Zn(2+)</name>
        <dbReference type="ChEBI" id="CHEBI:29105"/>
        <label>3</label>
        <note>regulatory; ligand shared between homodimeric partners</note>
    </ligand>
</feature>
<feature type="binding site" description="in chain B" evidence="10 20">
    <location>
        <position position="364"/>
    </location>
    <ligand>
        <name>Zn(2+)</name>
        <dbReference type="ChEBI" id="CHEBI:29105"/>
        <label>3</label>
        <note>regulatory; ligand shared between homodimeric partners</note>
    </ligand>
</feature>
<feature type="splice variant" id="VSP_024025" description="In isoform 2." evidence="11 13 15">
    <location>
        <begin position="1"/>
        <end position="49"/>
    </location>
</feature>
<feature type="sequence variant" id="VAR_031258" description="In dbSNP:rs16889462.">
    <original>R</original>
    <variation>Q</variation>
    <location>
        <position position="325"/>
    </location>
</feature>
<feature type="sequence variant" id="VAR_031259" description="Decreased transport reaction kinetics; decreased affinity for zinc ions; decreased zinc ion import into organelle; no effect on protein abundance; dbSNP:rs13266634." evidence="7 9">
    <original>R</original>
    <variation>W</variation>
    <location>
        <position position="325"/>
    </location>
</feature>
<feature type="mutagenesis site" description="Decreased zinc ion transmembrane transport." evidence="10">
    <location>
        <begin position="52"/>
        <end position="54"/>
    </location>
</feature>
<feature type="mutagenesis site" description="Decreased zinc ion transmembrane transport; when associated with A-220." evidence="10">
    <original>H</original>
    <variation>A</variation>
    <location>
        <position position="106"/>
    </location>
</feature>
<feature type="mutagenesis site" description="Loss of transported zinc binding and decreased zinc ion transmembrane transport; when associated with N-224." evidence="10">
    <original>D</original>
    <variation>N</variation>
    <location>
        <position position="110"/>
    </location>
</feature>
<feature type="mutagenesis site" description="Decreased zinc ion transmembrane transport; when associated with A-345." evidence="10">
    <original>H</original>
    <variation>A</variation>
    <location>
        <position position="137"/>
    </location>
</feature>
<feature type="mutagenesis site" description="Decreased zinc ion transmembrane transport; when associated with A-106." evidence="10">
    <original>H</original>
    <variation>A</variation>
    <location>
        <position position="220"/>
    </location>
</feature>
<feature type="mutagenesis site" description="Loss of transported zinc binding and decreased zinc ion transmembrane transport; when associated with N-110." evidence="10">
    <original>D</original>
    <variation>N</variation>
    <location>
        <position position="224"/>
    </location>
</feature>
<feature type="mutagenesis site" description="Decreased zinc ion transmembrane transport; when associated with A-137." evidence="10">
    <original>H</original>
    <variation>A</variation>
    <location>
        <position position="345"/>
    </location>
</feature>
<feature type="sequence conflict" description="In Ref. 1; AAM80562." evidence="17" ref="1">
    <original>Y</original>
    <variation>H</variation>
    <location>
        <position position="18"/>
    </location>
</feature>
<feature type="sequence conflict" description="In Ref. 3; ABQ59023." evidence="17" ref="3">
    <original>L</original>
    <variation>S</variation>
    <location>
        <position position="123"/>
    </location>
</feature>
<feature type="sequence conflict" description="In Ref. 3; CAD28545." evidence="17" ref="3">
    <original>L</original>
    <variation>P</variation>
    <location>
        <position position="222"/>
    </location>
</feature>
<feature type="sequence conflict" description="In Ref. 3; CAD28545." evidence="17" ref="3">
    <original>S</original>
    <variation>C</variation>
    <location>
        <position position="302"/>
    </location>
</feature>
<comment type="function">
    <text evidence="3 5 9 10">Proton-coupled zinc ion antiporter mediating the entry of zinc into the lumen of pancreatic beta cell secretory granules, thereby regulating insulin secretion.</text>
</comment>
<comment type="catalytic activity">
    <reaction evidence="10">
        <text>Zn(2+)(in) + 2 H(+)(out) = Zn(2+)(out) + 2 H(+)(in)</text>
        <dbReference type="Rhea" id="RHEA:72627"/>
        <dbReference type="ChEBI" id="CHEBI:15378"/>
        <dbReference type="ChEBI" id="CHEBI:29105"/>
    </reaction>
</comment>
<comment type="biophysicochemical properties">
    <kinetics>
        <KM evidence="9">71.42 uM for Zn(2+) (in reconstituted proteoliposomes composed of phosphatidylcholine, phosphatidylethanolamine, phosphatidylinositol, phosphatidylserine and cholesterol)</KM>
    </kinetics>
</comment>
<comment type="subunit">
    <text evidence="9 10">Homodimer.</text>
</comment>
<comment type="interaction">
    <interactant intactId="EBI-10262251">
        <id>Q8IWU4</id>
    </interactant>
    <interactant intactId="EBI-941819">
        <id>P16157-17</id>
        <label>ANK1</label>
    </interactant>
    <organismsDiffer>false</organismsDiffer>
    <experiments>3</experiments>
</comment>
<comment type="interaction">
    <interactant intactId="EBI-10262251">
        <id>Q8IWU4</id>
    </interactant>
    <interactant intactId="EBI-13059134">
        <id>Q13520</id>
        <label>AQP6</label>
    </interactant>
    <organismsDiffer>false</organismsDiffer>
    <experiments>3</experiments>
</comment>
<comment type="interaction">
    <interactant intactId="EBI-10262251">
        <id>Q8IWU4</id>
    </interactant>
    <interactant intactId="EBI-718376">
        <id>Q9NVJ2</id>
        <label>ARL8B</label>
    </interactant>
    <organismsDiffer>false</organismsDiffer>
    <experiments>3</experiments>
</comment>
<comment type="interaction">
    <interactant intactId="EBI-10262251">
        <id>Q8IWU4</id>
    </interactant>
    <interactant intactId="EBI-12069500">
        <id>Q9HD20-3</id>
        <label>ATP13A1</label>
    </interactant>
    <organismsDiffer>false</organismsDiffer>
    <experiments>3</experiments>
</comment>
<comment type="interaction">
    <interactant intactId="EBI-10262251">
        <id>Q8IWU4</id>
    </interactant>
    <interactant intactId="EBI-747430">
        <id>Q9BXK5</id>
        <label>BCL2L13</label>
    </interactant>
    <organismsDiffer>false</organismsDiffer>
    <experiments>3</experiments>
</comment>
<comment type="interaction">
    <interactant intactId="EBI-10262251">
        <id>Q8IWU4</id>
    </interactant>
    <interactant intactId="EBI-700794">
        <id>Q13323</id>
        <label>BIK</label>
    </interactant>
    <organismsDiffer>false</organismsDiffer>
    <experiments>3</experiments>
</comment>
<comment type="interaction">
    <interactant intactId="EBI-10262251">
        <id>Q8IWU4</id>
    </interactant>
    <interactant intactId="EBI-7996695">
        <id>Q8WZ55</id>
        <label>BSND</label>
    </interactant>
    <organismsDiffer>false</organismsDiffer>
    <experiments>3</experiments>
</comment>
<comment type="interaction">
    <interactant intactId="EBI-10262251">
        <id>Q8IWU4</id>
    </interactant>
    <interactant intactId="EBI-2873970">
        <id>P13236</id>
        <label>CCL4</label>
    </interactant>
    <organismsDiffer>false</organismsDiffer>
    <experiments>3</experiments>
</comment>
<comment type="interaction">
    <interactant intactId="EBI-10262251">
        <id>Q8IWU4</id>
    </interactant>
    <interactant intactId="EBI-2824782">
        <id>Q8TCZ2</id>
        <label>CD99L2</label>
    </interactant>
    <organismsDiffer>false</organismsDiffer>
    <experiments>3</experiments>
</comment>
<comment type="interaction">
    <interactant intactId="EBI-10262251">
        <id>Q8IWU4</id>
    </interactant>
    <interactant intactId="EBI-2130213">
        <id>Q99675</id>
        <label>CGRRF1</label>
    </interactant>
    <organismsDiffer>false</organismsDiffer>
    <experiments>3</experiments>
</comment>
<comment type="interaction">
    <interactant intactId="EBI-10262251">
        <id>Q8IWU4</id>
    </interactant>
    <interactant intactId="EBI-12955011">
        <id>P56747</id>
        <label>CLDN6</label>
    </interactant>
    <organismsDiffer>false</organismsDiffer>
    <experiments>3</experiments>
</comment>
<comment type="interaction">
    <interactant intactId="EBI-10262251">
        <id>Q8IWU4</id>
    </interactant>
    <interactant intactId="EBI-2807956">
        <id>Q96FZ5</id>
        <label>CMTM7</label>
    </interactant>
    <organismsDiffer>false</organismsDiffer>
    <experiments>3</experiments>
</comment>
<comment type="interaction">
    <interactant intactId="EBI-10262251">
        <id>Q8IWU4</id>
    </interactant>
    <interactant intactId="EBI-18013275">
        <id>Q7Z7G2</id>
        <label>CPLX4</label>
    </interactant>
    <organismsDiffer>false</organismsDiffer>
    <experiments>3</experiments>
</comment>
<comment type="interaction">
    <interactant intactId="EBI-10262251">
        <id>Q8IWU4</id>
    </interactant>
    <interactant intactId="EBI-6942903">
        <id>Q96BA8</id>
        <label>CREB3L1</label>
    </interactant>
    <organismsDiffer>false</organismsDiffer>
    <experiments>9</experiments>
</comment>
<comment type="interaction">
    <interactant intactId="EBI-10262251">
        <id>Q8IWU4</id>
    </interactant>
    <interactant intactId="EBI-398977">
        <id>Q9BUN8</id>
        <label>DERL1</label>
    </interactant>
    <organismsDiffer>false</organismsDiffer>
    <experiments>3</experiments>
</comment>
<comment type="interaction">
    <interactant intactId="EBI-10262251">
        <id>Q8IWU4</id>
    </interactant>
    <interactant intactId="EBI-3915253">
        <id>Q15125</id>
        <label>EBP</label>
    </interactant>
    <organismsDiffer>false</organismsDiffer>
    <experiments>3</experiments>
</comment>
<comment type="interaction">
    <interactant intactId="EBI-10262251">
        <id>Q8IWU4</id>
    </interactant>
    <interactant intactId="EBI-18535450">
        <id>Q9GZR5</id>
        <label>ELOVL4</label>
    </interactant>
    <organismsDiffer>false</organismsDiffer>
    <experiments>3</experiments>
</comment>
<comment type="interaction">
    <interactant intactId="EBI-10262251">
        <id>Q8IWU4</id>
    </interactant>
    <interactant intactId="EBI-781551">
        <id>Q9Y282</id>
        <label>ERGIC3</label>
    </interactant>
    <organismsDiffer>false</organismsDiffer>
    <experiments>3</experiments>
</comment>
<comment type="interaction">
    <interactant intactId="EBI-10262251">
        <id>Q8IWU4</id>
    </interactant>
    <interactant intactId="EBI-17973325">
        <id>P60508</id>
        <label>ERVFRD-1</label>
    </interactant>
    <organismsDiffer>false</organismsDiffer>
    <experiments>3</experiments>
</comment>
<comment type="interaction">
    <interactant intactId="EBI-10262251">
        <id>Q8IWU4</id>
    </interactant>
    <interactant intactId="EBI-18304435">
        <id>Q5JX71</id>
        <label>FAM209A</label>
    </interactant>
    <organismsDiffer>false</organismsDiffer>
    <experiments>3</experiments>
</comment>
<comment type="interaction">
    <interactant intactId="EBI-10262251">
        <id>Q8IWU4</id>
    </interactant>
    <interactant intactId="EBI-18938272">
        <id>Q96KR6</id>
        <label>FAM210B</label>
    </interactant>
    <organismsDiffer>false</organismsDiffer>
    <experiments>3</experiments>
</comment>
<comment type="interaction">
    <interactant intactId="EBI-10262251">
        <id>Q8IWU4</id>
    </interactant>
    <interactant intactId="EBI-12142299">
        <id>Q96IV6</id>
        <label>FAXDC2</label>
    </interactant>
    <organismsDiffer>false</organismsDiffer>
    <experiments>3</experiments>
</comment>
<comment type="interaction">
    <interactant intactId="EBI-10262251">
        <id>Q8IWU4</id>
    </interactant>
    <interactant intactId="EBI-12142257">
        <id>Q8TBE3</id>
        <label>FNDC9</label>
    </interactant>
    <organismsDiffer>false</organismsDiffer>
    <experiments>3</experiments>
</comment>
<comment type="interaction">
    <interactant intactId="EBI-10262251">
        <id>Q8IWU4</id>
    </interactant>
    <interactant intactId="EBI-2927498">
        <id>O60883</id>
        <label>GPR37L1</label>
    </interactant>
    <organismsDiffer>false</organismsDiffer>
    <experiments>3</experiments>
</comment>
<comment type="interaction">
    <interactant intactId="EBI-10262251">
        <id>Q8IWU4</id>
    </interactant>
    <interactant intactId="EBI-18076404">
        <id>O15529</id>
        <label>GPR42</label>
    </interactant>
    <organismsDiffer>false</organismsDiffer>
    <experiments>3</experiments>
</comment>
<comment type="interaction">
    <interactant intactId="EBI-10262251">
        <id>Q8IWU4</id>
    </interactant>
    <interactant intactId="EBI-10232876">
        <id>Q14416</id>
        <label>GRM2</label>
    </interactant>
    <organismsDiffer>false</organismsDiffer>
    <experiments>3</experiments>
</comment>
<comment type="interaction">
    <interactant intactId="EBI-10262251">
        <id>Q8IWU4</id>
    </interactant>
    <interactant intactId="EBI-740641">
        <id>Q9NP66</id>
        <label>HMG20A</label>
    </interactant>
    <organismsDiffer>false</organismsDiffer>
    <experiments>3</experiments>
</comment>
<comment type="interaction">
    <interactant intactId="EBI-10262251">
        <id>Q8IWU4</id>
    </interactant>
    <interactant intactId="EBI-712096">
        <id>P30519</id>
        <label>HMOX2</label>
    </interactant>
    <organismsDiffer>false</organismsDiffer>
    <experiments>3</experiments>
</comment>
<comment type="interaction">
    <interactant intactId="EBI-10262251">
        <id>Q8IWU4</id>
    </interactant>
    <interactant intactId="EBI-1052304">
        <id>Q8NBQ5</id>
        <label>HSD17B11</label>
    </interactant>
    <organismsDiffer>false</organismsDiffer>
    <experiments>3</experiments>
</comment>
<comment type="interaction">
    <interactant intactId="EBI-10262251">
        <id>Q8IWU4</id>
    </interactant>
    <interactant intactId="EBI-11305455">
        <id>Q96MG2</id>
        <label>JSRP1</label>
    </interactant>
    <organismsDiffer>false</organismsDiffer>
    <experiments>3</experiments>
</comment>
<comment type="interaction">
    <interactant intactId="EBI-10262251">
        <id>Q8IWU4</id>
    </interactant>
    <interactant intactId="EBI-17490413">
        <id>A8MZ59</id>
        <label>LEUTX</label>
    </interactant>
    <organismsDiffer>false</organismsDiffer>
    <experiments>3</experiments>
</comment>
<comment type="interaction">
    <interactant intactId="EBI-10262251">
        <id>Q8IWU4</id>
    </interactant>
    <interactant intactId="EBI-17263240">
        <id>P15941-11</id>
        <label>MUC1</label>
    </interactant>
    <organismsDiffer>false</organismsDiffer>
    <experiments>3</experiments>
</comment>
<comment type="interaction">
    <interactant intactId="EBI-10262251">
        <id>Q8IWU4</id>
    </interactant>
    <interactant intactId="EBI-3919611">
        <id>Q16617</id>
        <label>NKG7</label>
    </interactant>
    <organismsDiffer>false</organismsDiffer>
    <experiments>3</experiments>
</comment>
<comment type="interaction">
    <interactant intactId="EBI-10262251">
        <id>Q8IWU4</id>
    </interactant>
    <interactant intactId="EBI-1054848">
        <id>Q9P0S3</id>
        <label>ORMDL1</label>
    </interactant>
    <organismsDiffer>false</organismsDiffer>
    <experiments>3</experiments>
</comment>
<comment type="interaction">
    <interactant intactId="EBI-10262251">
        <id>Q8IWU4</id>
    </interactant>
    <interactant intactId="EBI-6916492">
        <id>Q9NUU6</id>
        <label>OTULINL</label>
    </interactant>
    <organismsDiffer>false</organismsDiffer>
    <experiments>3</experiments>
</comment>
<comment type="interaction">
    <interactant intactId="EBI-10262251">
        <id>Q8IWU4</id>
    </interactant>
    <interactant intactId="EBI-358311">
        <id>P12004</id>
        <label>PCNA</label>
    </interactant>
    <organismsDiffer>false</organismsDiffer>
    <experiments>3</experiments>
</comment>
<comment type="interaction">
    <interactant intactId="EBI-10262251">
        <id>Q8IWU4</id>
    </interactant>
    <interactant intactId="EBI-1050125">
        <id>O15173</id>
        <label>PGRMC2</label>
    </interactant>
    <organismsDiffer>false</organismsDiffer>
    <experiments>3</experiments>
</comment>
<comment type="interaction">
    <interactant intactId="EBI-10262251">
        <id>Q8IWU4</id>
    </interactant>
    <interactant intactId="EBI-12257782">
        <id>Q99640-2</id>
        <label>PKMYT1</label>
    </interactant>
    <organismsDiffer>false</organismsDiffer>
    <experiments>3</experiments>
</comment>
<comment type="interaction">
    <interactant intactId="EBI-10262251">
        <id>Q8IWU4</id>
    </interactant>
    <interactant intactId="EBI-692836">
        <id>P26678</id>
        <label>PLN</label>
    </interactant>
    <organismsDiffer>false</organismsDiffer>
    <experiments>3</experiments>
</comment>
<comment type="interaction">
    <interactant intactId="EBI-10262251">
        <id>Q8IWU4</id>
    </interactant>
    <interactant intactId="EBI-742898">
        <id>P43378</id>
        <label>PTPN9</label>
    </interactant>
    <organismsDiffer>false</organismsDiffer>
    <experiments>3</experiments>
</comment>
<comment type="interaction">
    <interactant intactId="EBI-10262251">
        <id>Q8IWU4</id>
    </interactant>
    <interactant intactId="EBI-7545592">
        <id>Q9H6H4</id>
        <label>REEP4</label>
    </interactant>
    <organismsDiffer>false</organismsDiffer>
    <experiments>3</experiments>
</comment>
<comment type="interaction">
    <interactant intactId="EBI-10262251">
        <id>Q8IWU4</id>
    </interactant>
    <interactant intactId="EBI-14065960">
        <id>Q96HR9-2</id>
        <label>REEP6</label>
    </interactant>
    <organismsDiffer>false</organismsDiffer>
    <experiments>3</experiments>
</comment>
<comment type="interaction">
    <interactant intactId="EBI-10262251">
        <id>Q8IWU4</id>
    </interactant>
    <interactant intactId="EBI-10269209">
        <id>Q8NC24</id>
        <label>RELL2</label>
    </interactant>
    <organismsDiffer>false</organismsDiffer>
    <experiments>3</experiments>
</comment>
<comment type="interaction">
    <interactant intactId="EBI-10262251">
        <id>Q8IWU4</id>
    </interactant>
    <interactant intactId="EBI-1056589">
        <id>Q96TC7</id>
        <label>RMDN3</label>
    </interactant>
    <organismsDiffer>false</organismsDiffer>
    <experiments>3</experiments>
</comment>
<comment type="interaction">
    <interactant intactId="EBI-10262251">
        <id>Q8IWU4</id>
    </interactant>
    <interactant intactId="EBI-11525735">
        <id>O95197-3</id>
        <label>RTN3</label>
    </interactant>
    <organismsDiffer>false</organismsDiffer>
    <experiments>3</experiments>
</comment>
<comment type="interaction">
    <interactant intactId="EBI-10262251">
        <id>Q8IWU4</id>
    </interactant>
    <interactant intactId="EBI-8636004">
        <id>Q96GQ5</id>
        <label>RUSF1</label>
    </interactant>
    <organismsDiffer>false</organismsDiffer>
    <experiments>3</experiments>
</comment>
<comment type="interaction">
    <interactant intactId="EBI-10262251">
        <id>Q8IWU4</id>
    </interactant>
    <interactant intactId="EBI-3920694">
        <id>Q9NR31</id>
        <label>SAR1A</label>
    </interactant>
    <organismsDiffer>false</organismsDiffer>
    <experiments>3</experiments>
</comment>
<comment type="interaction">
    <interactant intactId="EBI-10262251">
        <id>Q8IWU4</id>
    </interactant>
    <interactant intactId="EBI-17247926">
        <id>Q9NY72</id>
        <label>SCN3B</label>
    </interactant>
    <organismsDiffer>false</organismsDiffer>
    <experiments>3</experiments>
</comment>
<comment type="interaction">
    <interactant intactId="EBI-10262251">
        <id>Q8IWU4</id>
    </interactant>
    <interactant intactId="EBI-9679163">
        <id>Q9Y6D0</id>
        <label>SELENOK</label>
    </interactant>
    <organismsDiffer>false</organismsDiffer>
    <experiments>3</experiments>
</comment>
<comment type="interaction">
    <interactant intactId="EBI-10262251">
        <id>Q8IWU4</id>
    </interactant>
    <interactant intactId="EBI-2854842">
        <id>Q8WV19</id>
        <label>SFT2D1</label>
    </interactant>
    <organismsDiffer>false</organismsDiffer>
    <experiments>3</experiments>
</comment>
<comment type="interaction">
    <interactant intactId="EBI-10262251">
        <id>Q8IWU4</id>
    </interactant>
    <interactant intactId="EBI-4402330">
        <id>O95562</id>
        <label>SFT2D2</label>
    </interactant>
    <organismsDiffer>false</organismsDiffer>
    <experiments>3</experiments>
</comment>
<comment type="interaction">
    <interactant intactId="EBI-10262251">
        <id>Q8IWU4</id>
    </interactant>
    <interactant intactId="EBI-17595455">
        <id>P54219-3</id>
        <label>SLC18A1</label>
    </interactant>
    <organismsDiffer>false</organismsDiffer>
    <experiments>3</experiments>
</comment>
<comment type="interaction">
    <interactant intactId="EBI-10262251">
        <id>Q8IWU4</id>
    </interactant>
    <interactant intactId="EBI-10294651">
        <id>Q99726</id>
        <label>SLC30A3</label>
    </interactant>
    <organismsDiffer>false</organismsDiffer>
    <experiments>3</experiments>
</comment>
<comment type="interaction">
    <interactant intactId="EBI-10262251">
        <id>Q8IWU4</id>
    </interactant>
    <interactant intactId="EBI-12898013">
        <id>Q9NP94</id>
        <label>SLC39A2</label>
    </interactant>
    <organismsDiffer>false</organismsDiffer>
    <experiments>3</experiments>
</comment>
<comment type="interaction">
    <interactant intactId="EBI-10262251">
        <id>Q8IWU4</id>
    </interactant>
    <interactant intactId="EBI-10819434">
        <id>Q9NPE6</id>
        <label>SPAG4</label>
    </interactant>
    <organismsDiffer>false</organismsDiffer>
    <experiments>3</experiments>
</comment>
<comment type="interaction">
    <interactant intactId="EBI-10262251">
        <id>Q8IWU4</id>
    </interactant>
    <interactant intactId="EBI-17280858">
        <id>Q8WWF3</id>
        <label>SSMEM1</label>
    </interactant>
    <organismsDiffer>false</organismsDiffer>
    <experiments>3</experiments>
</comment>
<comment type="interaction">
    <interactant intactId="EBI-10262251">
        <id>Q8IWU4</id>
    </interactant>
    <interactant intactId="EBI-13075176">
        <id>Q8N2H4</id>
        <label>SYS1</label>
    </interactant>
    <organismsDiffer>false</organismsDiffer>
    <experiments>3</experiments>
</comment>
<comment type="interaction">
    <interactant intactId="EBI-10262251">
        <id>Q8IWU4</id>
    </interactant>
    <interactant intactId="EBI-8032987">
        <id>Q8N9I0</id>
        <label>SYT2</label>
    </interactant>
    <organismsDiffer>false</organismsDiffer>
    <experiments>3</experiments>
</comment>
<comment type="interaction">
    <interactant intactId="EBI-10262251">
        <id>Q8IWU4</id>
    </interactant>
    <interactant intactId="EBI-726691">
        <id>Q8WY91</id>
        <label>THAP4</label>
    </interactant>
    <organismsDiffer>false</organismsDiffer>
    <experiments>3</experiments>
</comment>
<comment type="interaction">
    <interactant intactId="EBI-10262251">
        <id>Q8IWU4</id>
    </interactant>
    <interactant intactId="EBI-311394">
        <id>Q9C0I4</id>
        <label>THSD7B</label>
    </interactant>
    <organismsDiffer>false</organismsDiffer>
    <experiments>3</experiments>
</comment>
<comment type="interaction">
    <interactant intactId="EBI-10262251">
        <id>Q8IWU4</id>
    </interactant>
    <interactant intactId="EBI-723946">
        <id>P17152</id>
        <label>TMEM11</label>
    </interactant>
    <organismsDiffer>false</organismsDiffer>
    <experiments>3</experiments>
</comment>
<comment type="interaction">
    <interactant intactId="EBI-10262251">
        <id>Q8IWU4</id>
    </interactant>
    <interactant intactId="EBI-7238458">
        <id>Q8IV31</id>
        <label>TMEM139</label>
    </interactant>
    <organismsDiffer>false</organismsDiffer>
    <experiments>3</experiments>
</comment>
<comment type="interaction">
    <interactant intactId="EBI-10262251">
        <id>Q8IWU4</id>
    </interactant>
    <interactant intactId="EBI-8638294">
        <id>Q9NUH8</id>
        <label>TMEM14B</label>
    </interactant>
    <organismsDiffer>false</organismsDiffer>
    <experiments>3</experiments>
</comment>
<comment type="interaction">
    <interactant intactId="EBI-10262251">
        <id>Q8IWU4</id>
    </interactant>
    <interactant intactId="EBI-12876824">
        <id>Q9BTX3</id>
        <label>TMEM208</label>
    </interactant>
    <organismsDiffer>false</organismsDiffer>
    <experiments>3</experiments>
</comment>
<comment type="interaction">
    <interactant intactId="EBI-10262251">
        <id>Q8IWU4</id>
    </interactant>
    <interactant intactId="EBI-10982110">
        <id>Q96Q45-2</id>
        <label>TMEM237</label>
    </interactant>
    <organismsDiffer>false</organismsDiffer>
    <experiments>3</experiments>
</comment>
<comment type="interaction">
    <interactant intactId="EBI-10262251">
        <id>Q8IWU4</id>
    </interactant>
    <interactant intactId="EBI-12903814">
        <id>O95807</id>
        <label>TMEM50A</label>
    </interactant>
    <organismsDiffer>false</organismsDiffer>
    <experiments>3</experiments>
</comment>
<comment type="interaction">
    <interactant intactId="EBI-10262251">
        <id>Q8IWU4</id>
    </interactant>
    <interactant intactId="EBI-18178701">
        <id>Q4KMG9</id>
        <label>TMEM52B</label>
    </interactant>
    <organismsDiffer>false</organismsDiffer>
    <experiments>3</experiments>
</comment>
<comment type="interaction">
    <interactant intactId="EBI-10262251">
        <id>Q8IWU4</id>
    </interactant>
    <interactant intactId="EBI-11742770">
        <id>Q96HE8</id>
        <label>TMEM80</label>
    </interactant>
    <organismsDiffer>false</organismsDiffer>
    <experiments>3</experiments>
</comment>
<comment type="interaction">
    <interactant intactId="EBI-10262251">
        <id>Q8IWU4</id>
    </interactant>
    <interactant intactId="EBI-723976">
        <id>Q9P0T7</id>
        <label>TMEM9</label>
    </interactant>
    <organismsDiffer>false</organismsDiffer>
    <experiments>3</experiments>
</comment>
<comment type="interaction">
    <interactant intactId="EBI-10262251">
        <id>Q8IWU4</id>
    </interactant>
    <interactant intactId="EBI-3914288">
        <id>O60636</id>
        <label>TSPAN2</label>
    </interactant>
    <organismsDiffer>false</organismsDiffer>
    <experiments>3</experiments>
</comment>
<comment type="interaction">
    <interactant intactId="EBI-10262251">
        <id>Q8IWU4</id>
    </interactant>
    <interactant intactId="EBI-12097582">
        <id>P23763-3</id>
        <label>VAMP1</label>
    </interactant>
    <organismsDiffer>false</organismsDiffer>
    <experiments>3</experiments>
</comment>
<comment type="interaction">
    <interactant intactId="EBI-10262251">
        <id>Q8IWU4</id>
    </interactant>
    <interactant intactId="EBI-520113">
        <id>P63027</id>
        <label>VAMP2</label>
    </interactant>
    <organismsDiffer>false</organismsDiffer>
    <experiments>3</experiments>
</comment>
<comment type="interaction">
    <interactant intactId="EBI-10262251">
        <id>Q8IWU4</id>
    </interactant>
    <interactant intactId="EBI-751253">
        <id>Q9BSR8</id>
        <label>YIPF4</label>
    </interactant>
    <organismsDiffer>false</organismsDiffer>
    <experiments>3</experiments>
</comment>
<comment type="interaction">
    <interactant intactId="EBI-10262251">
        <id>Q8IWU4</id>
    </interactant>
    <interactant intactId="EBI-751210">
        <id>Q96EC8</id>
        <label>YIPF6</label>
    </interactant>
    <organismsDiffer>false</organismsDiffer>
    <experiments>3</experiments>
</comment>
<comment type="interaction">
    <interactant intactId="EBI-10262251">
        <id>Q8IWU4</id>
    </interactant>
    <interactant intactId="EBI-3892947">
        <id>Q5T4F4</id>
        <label>ZFYVE27</label>
    </interactant>
    <organismsDiffer>false</organismsDiffer>
    <experiments>3</experiments>
</comment>
<comment type="interaction">
    <interactant intactId="EBI-10262251">
        <id>Q8IWU4</id>
    </interactant>
    <interactant intactId="EBI-11477759">
        <id>PRO_0000041304</id>
        <dbReference type="UniProtKB" id="P08563"/>
    </interactant>
    <organismsDiffer>true</organismsDiffer>
    <experiments>2</experiments>
</comment>
<comment type="subcellular location">
    <subcellularLocation>
        <location evidence="3 5">Cytoplasmic vesicle</location>
        <location evidence="3 5">Secretory vesicle membrane</location>
        <topology evidence="1">Multi-pass membrane protein</topology>
    </subcellularLocation>
    <subcellularLocation>
        <location evidence="3 5">Cell membrane</location>
        <topology evidence="1">Multi-pass membrane protein</topology>
    </subcellularLocation>
    <text evidence="3">Associated with insulin and glucagon secretory granules.</text>
</comment>
<comment type="alternative products">
    <event type="alternative splicing"/>
    <isoform>
        <id>Q8IWU4-1</id>
        <name>1</name>
        <sequence type="displayed"/>
    </isoform>
    <isoform>
        <id>Q8IWU4-2</id>
        <name>2</name>
        <sequence type="described" ref="VSP_024025"/>
    </isoform>
</comment>
<comment type="tissue specificity">
    <text evidence="3 4 5 6 8">In the endocrine pancreas, expressed in insulin-producing beta cells. Expressed at relatively high levels in subcutaneous fat tissue from lean persons; much lower levels in visceral fat, whether from lean or obese individuals, and in subcutaneous fat tissue from obese individuals. Expressed in peripheral blood mononuclear cells, including T-cells and B-cells, with great variation among individuals ranging from negative to strongly positive.</text>
</comment>
<comment type="polymorphism">
    <text evidence="7">Variant Trp-325 is a risk factor that confers susceptibility to type 2 diabetes mellitus (T2D) [MIM:125853].</text>
</comment>
<comment type="miscellaneous">
    <text evidence="16">Each subunit of the homodimer independently transports zinc ions in a pH-dependent manner. The cytosolic pH promotes binding of zinc ions to the transporter binding site. Upon change into the organelle-facing conformation, the two histidines of the zinc-binding site get protonated at lumenal lower pH, triggering zinc release into the organelle. The transporter then moves back to the cytosolic-facing conformation where the two histidines get deprotonated at higher pH, resulting in a net antiport of 2 protons.</text>
</comment>
<comment type="similarity">
    <text evidence="17">Belongs to the cation diffusion facilitator (CDF) transporter (TC 2.A.4) family. SLC30A subfamily.</text>
</comment>
<keyword id="KW-0002">3D-structure</keyword>
<keyword id="KW-0025">Alternative splicing</keyword>
<keyword id="KW-0050">Antiport</keyword>
<keyword id="KW-1003">Cell membrane</keyword>
<keyword id="KW-0968">Cytoplasmic vesicle</keyword>
<keyword id="KW-0219">Diabetes mellitus</keyword>
<keyword id="KW-0406">Ion transport</keyword>
<keyword id="KW-0472">Membrane</keyword>
<keyword id="KW-0479">Metal-binding</keyword>
<keyword id="KW-1267">Proteomics identification</keyword>
<keyword id="KW-1185">Reference proteome</keyword>
<keyword id="KW-0812">Transmembrane</keyword>
<keyword id="KW-1133">Transmembrane helix</keyword>
<keyword id="KW-0813">Transport</keyword>
<keyword id="KW-0862">Zinc</keyword>
<keyword id="KW-0864">Zinc transport</keyword>
<reference key="1">
    <citation type="journal article" date="2004" name="Diabetes">
        <title>Identification and cloning of a beta-cell-specific zinc transporter, ZnT-8, localized into insulin secretory granules.</title>
        <authorList>
            <person name="Chimienti F."/>
            <person name="Devergnas S."/>
            <person name="Favier A."/>
            <person name="Seve M."/>
        </authorList>
    </citation>
    <scope>NUCLEOTIDE SEQUENCE [MRNA] (ISOFORM 1)</scope>
    <scope>FUNCTION</scope>
    <scope>SUBCELLULAR LOCATION</scope>
    <scope>TISSUE SPECIFICITY</scope>
    <source>
        <tissue>Pancreas</tissue>
    </source>
</reference>
<reference key="2">
    <citation type="journal article" date="2004" name="Nat. Genet.">
        <title>Complete sequencing and characterization of 21,243 full-length human cDNAs.</title>
        <authorList>
            <person name="Ota T."/>
            <person name="Suzuki Y."/>
            <person name="Nishikawa T."/>
            <person name="Otsuki T."/>
            <person name="Sugiyama T."/>
            <person name="Irie R."/>
            <person name="Wakamatsu A."/>
            <person name="Hayashi K."/>
            <person name="Sato H."/>
            <person name="Nagai K."/>
            <person name="Kimura K."/>
            <person name="Makita H."/>
            <person name="Sekine M."/>
            <person name="Obayashi M."/>
            <person name="Nishi T."/>
            <person name="Shibahara T."/>
            <person name="Tanaka T."/>
            <person name="Ishii S."/>
            <person name="Yamamoto J."/>
            <person name="Saito K."/>
            <person name="Kawai Y."/>
            <person name="Isono Y."/>
            <person name="Nakamura Y."/>
            <person name="Nagahari K."/>
            <person name="Murakami K."/>
            <person name="Yasuda T."/>
            <person name="Iwayanagi T."/>
            <person name="Wagatsuma M."/>
            <person name="Shiratori A."/>
            <person name="Sudo H."/>
            <person name="Hosoiri T."/>
            <person name="Kaku Y."/>
            <person name="Kodaira H."/>
            <person name="Kondo H."/>
            <person name="Sugawara M."/>
            <person name="Takahashi M."/>
            <person name="Kanda K."/>
            <person name="Yokoi T."/>
            <person name="Furuya T."/>
            <person name="Kikkawa E."/>
            <person name="Omura Y."/>
            <person name="Abe K."/>
            <person name="Kamihara K."/>
            <person name="Katsuta N."/>
            <person name="Sato K."/>
            <person name="Tanikawa M."/>
            <person name="Yamazaki M."/>
            <person name="Ninomiya K."/>
            <person name="Ishibashi T."/>
            <person name="Yamashita H."/>
            <person name="Murakawa K."/>
            <person name="Fujimori K."/>
            <person name="Tanai H."/>
            <person name="Kimata M."/>
            <person name="Watanabe M."/>
            <person name="Hiraoka S."/>
            <person name="Chiba Y."/>
            <person name="Ishida S."/>
            <person name="Ono Y."/>
            <person name="Takiguchi S."/>
            <person name="Watanabe S."/>
            <person name="Yosida M."/>
            <person name="Hotuta T."/>
            <person name="Kusano J."/>
            <person name="Kanehori K."/>
            <person name="Takahashi-Fujii A."/>
            <person name="Hara H."/>
            <person name="Tanase T.-O."/>
            <person name="Nomura Y."/>
            <person name="Togiya S."/>
            <person name="Komai F."/>
            <person name="Hara R."/>
            <person name="Takeuchi K."/>
            <person name="Arita M."/>
            <person name="Imose N."/>
            <person name="Musashino K."/>
            <person name="Yuuki H."/>
            <person name="Oshima A."/>
            <person name="Sasaki N."/>
            <person name="Aotsuka S."/>
            <person name="Yoshikawa Y."/>
            <person name="Matsunawa H."/>
            <person name="Ichihara T."/>
            <person name="Shiohata N."/>
            <person name="Sano S."/>
            <person name="Moriya S."/>
            <person name="Momiyama H."/>
            <person name="Satoh N."/>
            <person name="Takami S."/>
            <person name="Terashima Y."/>
            <person name="Suzuki O."/>
            <person name="Nakagawa S."/>
            <person name="Senoh A."/>
            <person name="Mizoguchi H."/>
            <person name="Goto Y."/>
            <person name="Shimizu F."/>
            <person name="Wakebe H."/>
            <person name="Hishigaki H."/>
            <person name="Watanabe T."/>
            <person name="Sugiyama A."/>
            <person name="Takemoto M."/>
            <person name="Kawakami B."/>
            <person name="Yamazaki M."/>
            <person name="Watanabe K."/>
            <person name="Kumagai A."/>
            <person name="Itakura S."/>
            <person name="Fukuzumi Y."/>
            <person name="Fujimori Y."/>
            <person name="Komiyama M."/>
            <person name="Tashiro H."/>
            <person name="Tanigami A."/>
            <person name="Fujiwara T."/>
            <person name="Ono T."/>
            <person name="Yamada K."/>
            <person name="Fujii Y."/>
            <person name="Ozaki K."/>
            <person name="Hirao M."/>
            <person name="Ohmori Y."/>
            <person name="Kawabata A."/>
            <person name="Hikiji T."/>
            <person name="Kobatake N."/>
            <person name="Inagaki H."/>
            <person name="Ikema Y."/>
            <person name="Okamoto S."/>
            <person name="Okitani R."/>
            <person name="Kawakami T."/>
            <person name="Noguchi S."/>
            <person name="Itoh T."/>
            <person name="Shigeta K."/>
            <person name="Senba T."/>
            <person name="Matsumura K."/>
            <person name="Nakajima Y."/>
            <person name="Mizuno T."/>
            <person name="Morinaga M."/>
            <person name="Sasaki M."/>
            <person name="Togashi T."/>
            <person name="Oyama M."/>
            <person name="Hata H."/>
            <person name="Watanabe M."/>
            <person name="Komatsu T."/>
            <person name="Mizushima-Sugano J."/>
            <person name="Satoh T."/>
            <person name="Shirai Y."/>
            <person name="Takahashi Y."/>
            <person name="Nakagawa K."/>
            <person name="Okumura K."/>
            <person name="Nagase T."/>
            <person name="Nomura N."/>
            <person name="Kikuchi H."/>
            <person name="Masuho Y."/>
            <person name="Yamashita R."/>
            <person name="Nakai K."/>
            <person name="Yada T."/>
            <person name="Nakamura Y."/>
            <person name="Ohara O."/>
            <person name="Isogai T."/>
            <person name="Sugano S."/>
        </authorList>
    </citation>
    <scope>NUCLEOTIDE SEQUENCE [LARGE SCALE MRNA] (ISOFORM 2)</scope>
    <source>
        <tissue>Kidney</tissue>
    </source>
</reference>
<reference key="3">
    <citation type="journal article" date="2007" name="BMC Genomics">
        <title>The full-ORF clone resource of the German cDNA consortium.</title>
        <authorList>
            <person name="Bechtel S."/>
            <person name="Rosenfelder H."/>
            <person name="Duda A."/>
            <person name="Schmidt C.P."/>
            <person name="Ernst U."/>
            <person name="Wellenreuther R."/>
            <person name="Mehrle A."/>
            <person name="Schuster C."/>
            <person name="Bahr A."/>
            <person name="Bloecker H."/>
            <person name="Heubner D."/>
            <person name="Hoerlein A."/>
            <person name="Michel G."/>
            <person name="Wedler H."/>
            <person name="Koehrer K."/>
            <person name="Ottenwaelder B."/>
            <person name="Poustka A."/>
            <person name="Wiemann S."/>
            <person name="Schupp I."/>
        </authorList>
    </citation>
    <scope>NUCLEOTIDE SEQUENCE [LARGE SCALE MRNA] (ISOFORM 2)</scope>
    <source>
        <tissue>Amygdala</tissue>
        <tissue>Brain</tissue>
    </source>
</reference>
<reference key="4">
    <citation type="journal article" date="2006" name="Nature">
        <title>DNA sequence and analysis of human chromosome 8.</title>
        <authorList>
            <person name="Nusbaum C."/>
            <person name="Mikkelsen T.S."/>
            <person name="Zody M.C."/>
            <person name="Asakawa S."/>
            <person name="Taudien S."/>
            <person name="Garber M."/>
            <person name="Kodira C.D."/>
            <person name="Schueler M.G."/>
            <person name="Shimizu A."/>
            <person name="Whittaker C.A."/>
            <person name="Chang J.L."/>
            <person name="Cuomo C.A."/>
            <person name="Dewar K."/>
            <person name="FitzGerald M.G."/>
            <person name="Yang X."/>
            <person name="Allen N.R."/>
            <person name="Anderson S."/>
            <person name="Asakawa T."/>
            <person name="Blechschmidt K."/>
            <person name="Bloom T."/>
            <person name="Borowsky M.L."/>
            <person name="Butler J."/>
            <person name="Cook A."/>
            <person name="Corum B."/>
            <person name="DeArellano K."/>
            <person name="DeCaprio D."/>
            <person name="Dooley K.T."/>
            <person name="Dorris L. III"/>
            <person name="Engels R."/>
            <person name="Gloeckner G."/>
            <person name="Hafez N."/>
            <person name="Hagopian D.S."/>
            <person name="Hall J.L."/>
            <person name="Ishikawa S.K."/>
            <person name="Jaffe D.B."/>
            <person name="Kamat A."/>
            <person name="Kudoh J."/>
            <person name="Lehmann R."/>
            <person name="Lokitsang T."/>
            <person name="Macdonald P."/>
            <person name="Major J.E."/>
            <person name="Matthews C.D."/>
            <person name="Mauceli E."/>
            <person name="Menzel U."/>
            <person name="Mihalev A.H."/>
            <person name="Minoshima S."/>
            <person name="Murayama Y."/>
            <person name="Naylor J.W."/>
            <person name="Nicol R."/>
            <person name="Nguyen C."/>
            <person name="O'Leary S.B."/>
            <person name="O'Neill K."/>
            <person name="Parker S.C.J."/>
            <person name="Polley A."/>
            <person name="Raymond C.K."/>
            <person name="Reichwald K."/>
            <person name="Rodriguez J."/>
            <person name="Sasaki T."/>
            <person name="Schilhabel M."/>
            <person name="Siddiqui R."/>
            <person name="Smith C.L."/>
            <person name="Sneddon T.P."/>
            <person name="Talamas J.A."/>
            <person name="Tenzin P."/>
            <person name="Topham K."/>
            <person name="Venkataraman V."/>
            <person name="Wen G."/>
            <person name="Yamazaki S."/>
            <person name="Young S.K."/>
            <person name="Zeng Q."/>
            <person name="Zimmer A.R."/>
            <person name="Rosenthal A."/>
            <person name="Birren B.W."/>
            <person name="Platzer M."/>
            <person name="Shimizu N."/>
            <person name="Lander E.S."/>
        </authorList>
    </citation>
    <scope>NUCLEOTIDE SEQUENCE [LARGE SCALE GENOMIC DNA]</scope>
</reference>
<reference key="5">
    <citation type="submission" date="2005-07" db="EMBL/GenBank/DDBJ databases">
        <authorList>
            <person name="Mural R.J."/>
            <person name="Istrail S."/>
            <person name="Sutton G.G."/>
            <person name="Florea L."/>
            <person name="Halpern A.L."/>
            <person name="Mobarry C.M."/>
            <person name="Lippert R."/>
            <person name="Walenz B."/>
            <person name="Shatkay H."/>
            <person name="Dew I."/>
            <person name="Miller J.R."/>
            <person name="Flanigan M.J."/>
            <person name="Edwards N.J."/>
            <person name="Bolanos R."/>
            <person name="Fasulo D."/>
            <person name="Halldorsson B.V."/>
            <person name="Hannenhalli S."/>
            <person name="Turner R."/>
            <person name="Yooseph S."/>
            <person name="Lu F."/>
            <person name="Nusskern D.R."/>
            <person name="Shue B.C."/>
            <person name="Zheng X.H."/>
            <person name="Zhong F."/>
            <person name="Delcher A.L."/>
            <person name="Huson D.H."/>
            <person name="Kravitz S.A."/>
            <person name="Mouchard L."/>
            <person name="Reinert K."/>
            <person name="Remington K.A."/>
            <person name="Clark A.G."/>
            <person name="Waterman M.S."/>
            <person name="Eichler E.E."/>
            <person name="Adams M.D."/>
            <person name="Hunkapiller M.W."/>
            <person name="Myers E.W."/>
            <person name="Venter J.C."/>
        </authorList>
    </citation>
    <scope>NUCLEOTIDE SEQUENCE [LARGE SCALE GENOMIC DNA]</scope>
</reference>
<reference key="6">
    <citation type="journal article" date="2004" name="Genome Res.">
        <title>The status, quality, and expansion of the NIH full-length cDNA project: the Mammalian Gene Collection (MGC).</title>
        <authorList>
            <consortium name="The MGC Project Team"/>
        </authorList>
    </citation>
    <scope>NUCLEOTIDE SEQUENCE [LARGE SCALE MRNA] (ISOFORM 2)</scope>
    <source>
        <tissue>Lung</tissue>
    </source>
</reference>
<reference key="7">
    <citation type="journal article" date="2005" name="BioMetals">
        <title>ZnT-8, a pancreatic beta-cell-specific zinc transporter.</title>
        <authorList>
            <person name="Chimienti F."/>
            <person name="Favier A."/>
            <person name="Seve M."/>
        </authorList>
    </citation>
    <scope>TISSUE SPECIFICITY</scope>
</reference>
<reference key="8">
    <citation type="journal article" date="2006" name="J. Cell Sci.">
        <title>In vivo expression and functional characterization of the zinc transporter ZnT8 in glucose-induced insulin secretion.</title>
        <authorList>
            <person name="Chimienti F."/>
            <person name="Devergnas S."/>
            <person name="Pattou F."/>
            <person name="Schuit F."/>
            <person name="Garcia-Cuenca R."/>
            <person name="Vandewalle B."/>
            <person name="Kerr-Conte J."/>
            <person name="Van Lommel L."/>
            <person name="Grunwald D."/>
            <person name="Favier A."/>
            <person name="Seve M."/>
        </authorList>
    </citation>
    <scope>FUNCTION</scope>
    <scope>SUBCELLULAR LOCATION</scope>
    <scope>TISSUE SPECIFICITY</scope>
    <scope>TOPOLOGY</scope>
</reference>
<reference key="9">
    <citation type="journal article" date="2007" name="Mol. Cell. Endocrinol.">
        <title>Zinc-transporter genes in human visceral and subcutaneous adipocytes: lean versus obese.</title>
        <authorList>
            <person name="Smidt K."/>
            <person name="Pedersen S.B."/>
            <person name="Brock B."/>
            <person name="Schmitz O."/>
            <person name="Fisker S."/>
            <person name="Bendix J."/>
            <person name="Wogensen L."/>
            <person name="Rungby J."/>
        </authorList>
    </citation>
    <scope>TISSUE SPECIFICITY</scope>
</reference>
<reference key="10">
    <citation type="journal article" date="2008" name="J. Leukoc. Biol.">
        <title>Intracellular zinc homeostasis in leukocyte subsets is regulated by different expression of zinc exporters ZnT-1 to ZnT-9.</title>
        <authorList>
            <person name="Overbeck S."/>
            <person name="Uciechowski P."/>
            <person name="Ackland M.L."/>
            <person name="Ford D."/>
            <person name="Rink L."/>
        </authorList>
    </citation>
    <scope>TISSUE SPECIFICITY</scope>
</reference>
<reference key="11">
    <citation type="journal article" date="2016" name="J. Biol. Chem.">
        <title>Lipid-tuned Zinc Transport Activity of Human ZnT8 Protein Correlates with Risk for Type-2 Diabetes.</title>
        <authorList>
            <person name="Merriman C."/>
            <person name="Huang Q."/>
            <person name="Rutter G.A."/>
            <person name="Fu D."/>
        </authorList>
    </citation>
    <scope>FUNCTION</scope>
    <scope>BIOPHYSICOCHEMICAL PROPERTIES</scope>
    <scope>SUBUNIT</scope>
    <scope>CHARACTERIZATION OF VARIANT TRP-325</scope>
</reference>
<reference evidence="21 22 23" key="12">
    <citation type="journal article" date="2020" name="Elife">
        <title>Cryo-EM structures of human ZnT8 in both outward- and inward-facing conformations.</title>
        <authorList>
            <person name="Xue J."/>
            <person name="Xie T."/>
            <person name="Zeng W."/>
            <person name="Jiang Y."/>
            <person name="Bai X.C."/>
        </authorList>
    </citation>
    <scope>STRUCTURE BY ELECTRON MICROSCOPY (3.80 ANGSTROMS) OF 50-369 OF WILD-TYPE AND DOUBLE MUTANT ASN-110/ASN-224 IN COMPLEXES WITH ZINC IONS</scope>
    <scope>FUNCTION</scope>
    <scope>CATALYTIC ACTIVITY</scope>
    <scope>SUBUNIT</scope>
    <scope>MUTAGENESIS OF 52-HIS--HIS-54; HIS-106; ASP-110; HIS-137; HIS-220; ASP-224 AND HIS-345</scope>
    <scope>MOTIF</scope>
    <scope>REACTION MECHANISM</scope>
</reference>
<reference key="13">
    <citation type="journal article" date="2007" name="Nature">
        <title>A genome-wide association study identifies novel risk loci for type 2 diabetes.</title>
        <authorList>
            <person name="Sladek R."/>
            <person name="Rocheleau G."/>
            <person name="Rung J."/>
            <person name="Dina C."/>
            <person name="Shen L."/>
            <person name="Serre D."/>
            <person name="Boutin P."/>
            <person name="Vincent D."/>
            <person name="Belisle A."/>
            <person name="Hadjadj S."/>
            <person name="Balkau B."/>
            <person name="Heude B."/>
            <person name="Charpentier G."/>
            <person name="Hudson T.J."/>
            <person name="Montpetit A."/>
            <person name="Pshezhetsky A.V."/>
            <person name="Prentki M."/>
            <person name="Posner B.I."/>
            <person name="Balding D.J."/>
            <person name="Meyre D."/>
            <person name="Polychronakos C."/>
            <person name="Froguel P."/>
        </authorList>
    </citation>
    <scope>VARIANT TRP-325</scope>
    <scope>INVOLVEMENT IN T2D</scope>
</reference>
<evidence type="ECO:0000255" key="1"/>
<evidence type="ECO:0000256" key="2">
    <source>
        <dbReference type="SAM" id="MobiDB-lite"/>
    </source>
</evidence>
<evidence type="ECO:0000269" key="3">
    <source>
    </source>
</evidence>
<evidence type="ECO:0000269" key="4">
    <source>
    </source>
</evidence>
<evidence type="ECO:0000269" key="5">
    <source>
    </source>
</evidence>
<evidence type="ECO:0000269" key="6">
    <source>
    </source>
</evidence>
<evidence type="ECO:0000269" key="7">
    <source>
    </source>
</evidence>
<evidence type="ECO:0000269" key="8">
    <source>
    </source>
</evidence>
<evidence type="ECO:0000269" key="9">
    <source>
    </source>
</evidence>
<evidence type="ECO:0000269" key="10">
    <source>
    </source>
</evidence>
<evidence type="ECO:0000303" key="11">
    <source>
    </source>
</evidence>
<evidence type="ECO:0000303" key="12">
    <source>
    </source>
</evidence>
<evidence type="ECO:0000303" key="13">
    <source>
    </source>
</evidence>
<evidence type="ECO:0000303" key="14">
    <source>
    </source>
</evidence>
<evidence type="ECO:0000303" key="15">
    <source>
    </source>
</evidence>
<evidence type="ECO:0000303" key="16">
    <source>
    </source>
</evidence>
<evidence type="ECO:0000305" key="17"/>
<evidence type="ECO:0000305" key="18">
    <source>
    </source>
</evidence>
<evidence type="ECO:0000312" key="19">
    <source>
        <dbReference type="HGNC" id="HGNC:20303"/>
    </source>
</evidence>
<evidence type="ECO:0000312" key="20">
    <source>
        <dbReference type="PDB" id="6XPE"/>
    </source>
</evidence>
<evidence type="ECO:0007744" key="21">
    <source>
        <dbReference type="PDB" id="6XPD"/>
    </source>
</evidence>
<evidence type="ECO:0007744" key="22">
    <source>
        <dbReference type="PDB" id="6XPE"/>
    </source>
</evidence>
<evidence type="ECO:0007744" key="23">
    <source>
        <dbReference type="PDB" id="6XPF"/>
    </source>
</evidence>
<protein>
    <recommendedName>
        <fullName evidence="18">Proton-coupled zinc antiporter SLC30A8</fullName>
    </recommendedName>
    <alternativeName>
        <fullName evidence="19">Solute carrier family 30 member 8</fullName>
    </alternativeName>
    <alternativeName>
        <fullName evidence="12">Zinc transporter 8</fullName>
        <shortName evidence="12">ZnT-8</shortName>
    </alternativeName>
</protein>
<proteinExistence type="evidence at protein level"/>
<sequence length="369" mass="40755">MEFLERTYLVNDKAAKMYAFTLESVELQQKPVNKDQCPRERPEELESGGMYHCHSGSKPTEKGANEYAYAKWKLCSASAICFIFMIAEVVGGHIAGSLAVVTDAAHLLIDLTSFLLSLFSLWLSSKPPSKRLTFGWHRAEILGALLSILCIWVVTGVLVYLACERLLYPDYQIQATVMIIVSSCAVAANIVLTVVLHQRCLGHNHKEVQANASVRAAFVHALGDLFQSISVLISALIIYFKPEYKIADPICTFIFSILVLASTITILKDFSILLMEGVPKSLNYSGVKELILAVDGVLSVHSLHIWSLTMNQVILSAHVATAASRDSQVVRREIAKALSKSFTMHSLTIQMESPVDQDPDCLFCEDPCD</sequence>